<feature type="signal peptide" evidence="5">
    <location>
        <begin position="1" status="less than"/>
        <end position="11"/>
    </location>
</feature>
<feature type="chain" id="PRO_0000432791" description="L-amino acid oxidase">
    <location>
        <begin position="12"/>
        <end position="498" status="greater than"/>
    </location>
</feature>
<feature type="binding site" evidence="3">
    <location>
        <begin position="54"/>
        <end position="55"/>
    </location>
    <ligand>
        <name>FAD</name>
        <dbReference type="ChEBI" id="CHEBI:57692"/>
    </ligand>
</feature>
<feature type="binding site" evidence="3">
    <location>
        <begin position="74"/>
        <end position="78"/>
    </location>
    <ligand>
        <name>FAD</name>
        <dbReference type="ChEBI" id="CHEBI:57692"/>
    </ligand>
</feature>
<feature type="binding site" evidence="2">
    <location>
        <begin position="74"/>
        <end position="75"/>
    </location>
    <ligand>
        <name>FAD</name>
        <dbReference type="ChEBI" id="CHEBI:57692"/>
    </ligand>
</feature>
<feature type="binding site" evidence="3">
    <location>
        <position position="82"/>
    </location>
    <ligand>
        <name>FAD</name>
        <dbReference type="ChEBI" id="CHEBI:57692"/>
    </ligand>
</feature>
<feature type="binding site" evidence="3">
    <location>
        <begin position="98"/>
        <end position="101"/>
    </location>
    <ligand>
        <name>FAD</name>
        <dbReference type="ChEBI" id="CHEBI:57692"/>
    </ligand>
</feature>
<feature type="binding site" evidence="2">
    <location>
        <position position="101"/>
    </location>
    <ligand>
        <name>substrate</name>
    </ligand>
</feature>
<feature type="binding site" evidence="2">
    <location>
        <position position="234"/>
    </location>
    <ligand>
        <name>substrate</name>
    </ligand>
</feature>
<feature type="binding site" evidence="3">
    <location>
        <position position="272"/>
    </location>
    <ligand>
        <name>FAD</name>
        <dbReference type="ChEBI" id="CHEBI:57692"/>
    </ligand>
</feature>
<feature type="binding site" evidence="2">
    <location>
        <position position="383"/>
    </location>
    <ligand>
        <name>substrate</name>
    </ligand>
</feature>
<feature type="binding site" evidence="3">
    <location>
        <position position="468"/>
    </location>
    <ligand>
        <name>FAD</name>
        <dbReference type="ChEBI" id="CHEBI:57692"/>
    </ligand>
</feature>
<feature type="binding site" evidence="2">
    <location>
        <begin position="475"/>
        <end position="480"/>
    </location>
    <ligand>
        <name>FAD</name>
        <dbReference type="ChEBI" id="CHEBI:57692"/>
    </ligand>
</feature>
<feature type="binding site" evidence="2">
    <location>
        <begin position="475"/>
        <end position="476"/>
    </location>
    <ligand>
        <name>substrate</name>
    </ligand>
</feature>
<feature type="binding site" evidence="3">
    <location>
        <begin position="476"/>
        <end position="480"/>
    </location>
    <ligand>
        <name>FAD</name>
        <dbReference type="ChEBI" id="CHEBI:57692"/>
    </ligand>
</feature>
<feature type="glycosylation site" description="N-linked (GlcNAc...) asparagine" evidence="4">
    <location>
        <position position="183"/>
    </location>
</feature>
<feature type="disulfide bond" evidence="2">
    <location>
        <begin position="21"/>
        <end position="184"/>
    </location>
</feature>
<feature type="disulfide bond" evidence="2">
    <location>
        <begin position="342"/>
        <end position="423"/>
    </location>
</feature>
<feature type="non-terminal residue" evidence="6">
    <location>
        <position position="1"/>
    </location>
</feature>
<feature type="non-terminal residue" evidence="6">
    <location>
        <position position="498"/>
    </location>
</feature>
<evidence type="ECO:0000250" key="1">
    <source>
        <dbReference type="UniProtKB" id="P0CC17"/>
    </source>
</evidence>
<evidence type="ECO:0000250" key="2">
    <source>
        <dbReference type="UniProtKB" id="P81382"/>
    </source>
</evidence>
<evidence type="ECO:0000250" key="3">
    <source>
        <dbReference type="UniProtKB" id="Q6TGQ9"/>
    </source>
</evidence>
<evidence type="ECO:0000255" key="4"/>
<evidence type="ECO:0000269" key="5">
    <source>
    </source>
</evidence>
<evidence type="ECO:0000303" key="6">
    <source>
    </source>
</evidence>
<evidence type="ECO:0000305" key="7"/>
<evidence type="ECO:0000305" key="8">
    <source>
    </source>
</evidence>
<organism>
    <name type="scientific">Bothrops pictus</name>
    <name type="common">Desert lancehead</name>
    <dbReference type="NCBI Taxonomy" id="133440"/>
    <lineage>
        <taxon>Eukaryota</taxon>
        <taxon>Metazoa</taxon>
        <taxon>Chordata</taxon>
        <taxon>Craniata</taxon>
        <taxon>Vertebrata</taxon>
        <taxon>Euteleostomi</taxon>
        <taxon>Lepidosauria</taxon>
        <taxon>Squamata</taxon>
        <taxon>Bifurcata</taxon>
        <taxon>Unidentata</taxon>
        <taxon>Episquamata</taxon>
        <taxon>Toxicofera</taxon>
        <taxon>Serpentes</taxon>
        <taxon>Colubroidea</taxon>
        <taxon>Viperidae</taxon>
        <taxon>Crotalinae</taxon>
        <taxon>Bothrops</taxon>
    </lineage>
</organism>
<dbReference type="EC" id="1.4.3.2" evidence="5"/>
<dbReference type="EMBL" id="KJ094993">
    <property type="protein sequence ID" value="AHN91985.1"/>
    <property type="molecule type" value="mRNA"/>
</dbReference>
<dbReference type="SMR" id="X2L4E2"/>
<dbReference type="GO" id="GO:0005576">
    <property type="term" value="C:extracellular region"/>
    <property type="evidence" value="ECO:0007669"/>
    <property type="project" value="UniProtKB-SubCell"/>
</dbReference>
<dbReference type="GO" id="GO:0001716">
    <property type="term" value="F:L-amino-acid oxidase activity"/>
    <property type="evidence" value="ECO:0007669"/>
    <property type="project" value="UniProtKB-EC"/>
</dbReference>
<dbReference type="GO" id="GO:0090729">
    <property type="term" value="F:toxin activity"/>
    <property type="evidence" value="ECO:0007669"/>
    <property type="project" value="UniProtKB-KW"/>
</dbReference>
<dbReference type="GO" id="GO:0009063">
    <property type="term" value="P:amino acid catabolic process"/>
    <property type="evidence" value="ECO:0007669"/>
    <property type="project" value="TreeGrafter"/>
</dbReference>
<dbReference type="GO" id="GO:0006915">
    <property type="term" value="P:apoptotic process"/>
    <property type="evidence" value="ECO:0007669"/>
    <property type="project" value="UniProtKB-KW"/>
</dbReference>
<dbReference type="GO" id="GO:0042742">
    <property type="term" value="P:defense response to bacterium"/>
    <property type="evidence" value="ECO:0007669"/>
    <property type="project" value="UniProtKB-KW"/>
</dbReference>
<dbReference type="FunFam" id="1.10.405.10:FF:000004">
    <property type="entry name" value="Amine oxidase"/>
    <property type="match status" value="1"/>
</dbReference>
<dbReference type="FunFam" id="3.50.50.60:FF:000450">
    <property type="entry name" value="Amine oxidase"/>
    <property type="match status" value="1"/>
</dbReference>
<dbReference type="Gene3D" id="3.90.660.10">
    <property type="match status" value="1"/>
</dbReference>
<dbReference type="Gene3D" id="3.50.50.60">
    <property type="entry name" value="FAD/NAD(P)-binding domain"/>
    <property type="match status" value="1"/>
</dbReference>
<dbReference type="Gene3D" id="1.10.405.10">
    <property type="entry name" value="Guanine Nucleotide Dissociation Inhibitor, domain 1"/>
    <property type="match status" value="1"/>
</dbReference>
<dbReference type="InterPro" id="IPR002937">
    <property type="entry name" value="Amino_oxidase"/>
</dbReference>
<dbReference type="InterPro" id="IPR036188">
    <property type="entry name" value="FAD/NAD-bd_sf"/>
</dbReference>
<dbReference type="InterPro" id="IPR001613">
    <property type="entry name" value="Flavin_amine_oxidase"/>
</dbReference>
<dbReference type="InterPro" id="IPR050281">
    <property type="entry name" value="Flavin_monoamine_oxidase"/>
</dbReference>
<dbReference type="PANTHER" id="PTHR10742:SF355">
    <property type="entry name" value="AMINE OXIDASE"/>
    <property type="match status" value="1"/>
</dbReference>
<dbReference type="PANTHER" id="PTHR10742">
    <property type="entry name" value="FLAVIN MONOAMINE OXIDASE"/>
    <property type="match status" value="1"/>
</dbReference>
<dbReference type="Pfam" id="PF01593">
    <property type="entry name" value="Amino_oxidase"/>
    <property type="match status" value="1"/>
</dbReference>
<dbReference type="PRINTS" id="PR00757">
    <property type="entry name" value="AMINEOXDASEF"/>
</dbReference>
<dbReference type="SUPFAM" id="SSF54373">
    <property type="entry name" value="FAD-linked reductases, C-terminal domain"/>
    <property type="match status" value="1"/>
</dbReference>
<dbReference type="SUPFAM" id="SSF51905">
    <property type="entry name" value="FAD/NAD(P)-binding domain"/>
    <property type="match status" value="1"/>
</dbReference>
<protein>
    <recommendedName>
        <fullName evidence="6">L-amino acid oxidase</fullName>
        <shortName evidence="6">Bpic-LAAO</shortName>
        <shortName>LAO</shortName>
        <ecNumber evidence="5">1.4.3.2</ecNumber>
    </recommendedName>
</protein>
<comment type="function">
    <text evidence="1 5">Catalyzes an oxidative deamination of predominantly hydrophobic and aromatic L-amino acids, thus producing hydrogen peroxide that may contribute to the diverse toxic effects of this enzyme (By similarity). This enzyme shows activity on L-Leu (PubMed:29024770). This enzyme inhibits platelet aggregation in human platelet rich plasma induced by ADP (IC(50)=3.2 mg/mL), and shows antibacterial activities on both Gram-positive and Gram-negative bacteria (P.aeruginosa, V.cholerae, S.aureus, E.faecalis and E.coli) (PubMed:29024770). These two effects are due to hydrogen peroxide, since they are inhibited by catalase (PubMed:29024770). It also induces edema in mouse paw pads but does not show hemolytic activity (PubMed:29024770). This protein may also have activities in hemorrhage, and apoptosis (By similarity).</text>
</comment>
<comment type="catalytic activity">
    <reaction evidence="5">
        <text>an L-alpha-amino acid + O2 + H2O = a 2-oxocarboxylate + H2O2 + NH4(+)</text>
        <dbReference type="Rhea" id="RHEA:13781"/>
        <dbReference type="ChEBI" id="CHEBI:15377"/>
        <dbReference type="ChEBI" id="CHEBI:15379"/>
        <dbReference type="ChEBI" id="CHEBI:16240"/>
        <dbReference type="ChEBI" id="CHEBI:28938"/>
        <dbReference type="ChEBI" id="CHEBI:35179"/>
        <dbReference type="ChEBI" id="CHEBI:59869"/>
        <dbReference type="EC" id="1.4.3.2"/>
    </reaction>
</comment>
<comment type="catalytic activity">
    <reaction evidence="5">
        <text>L-leucine + O2 + H2O = 4-methyl-2-oxopentanoate + H2O2 + NH4(+)</text>
        <dbReference type="Rhea" id="RHEA:60996"/>
        <dbReference type="ChEBI" id="CHEBI:15377"/>
        <dbReference type="ChEBI" id="CHEBI:15379"/>
        <dbReference type="ChEBI" id="CHEBI:16240"/>
        <dbReference type="ChEBI" id="CHEBI:17865"/>
        <dbReference type="ChEBI" id="CHEBI:28938"/>
        <dbReference type="ChEBI" id="CHEBI:57427"/>
    </reaction>
</comment>
<comment type="cofactor">
    <cofactor evidence="2">
        <name>FAD</name>
        <dbReference type="ChEBI" id="CHEBI:57692"/>
    </cofactor>
</comment>
<comment type="activity regulation">
    <text evidence="5">Strongly inhibited by glutathione, and moderately inhibited by PMSF, acetate iodine and glutamic acid. Is also inhibited by Zn(2+) ions, but not by Ca(2+), Mg(2+) and Mn(2+).</text>
</comment>
<comment type="biophysicochemical properties">
    <phDependence>
        <text evidence="5">Optimum pH is 7.0-10.0.</text>
    </phDependence>
    <temperatureDependence>
        <text evidence="5">Optimum temperature is 35-45 degrees Celsius.</text>
    </temperatureDependence>
</comment>
<comment type="subunit">
    <text evidence="8">Homodimer; non-covalently linked.</text>
</comment>
<comment type="subcellular location">
    <subcellularLocation>
        <location evidence="5">Secreted</location>
    </subcellularLocation>
</comment>
<comment type="tissue specificity">
    <text evidence="8">Expressed by the venom gland.</text>
</comment>
<comment type="PTM">
    <text evidence="8">N-glycosylated. Contains 18.73% carbohydrates.</text>
</comment>
<comment type="similarity">
    <text evidence="7">Belongs to the flavin monoamine oxidase family. FIG1 subfamily.</text>
</comment>
<sequence>SLLFLAAVGSCADDRNPLEECFRETDYEEFLEIAKNGLSTTSNPKRVVIVGAGMSGLSAAYVLANAGHQVTVLEASERAGGRVKTYRNEKEGWYANLGPMRLPEKHRIVREYIKKFDLRLNEFSQENENAWYFLQNIKKRVREVNKDPGVLEYPVKPSEVGKSAGQLYEESLRKAVEELRRTNCSYMLNKYDTYSTKEYLLKEGNLSPGAVDMIGDLLNEDSGYYVSFIESLKHDDIFAYEKRFDEIVGGMDKLPTSMYQAIQEKVHLNARVIEIQQDVKEVTVTYQTSQKETLSVTADYVIVCTTSRAARRITFEPPLPPKKAHALLSVHYRSGTKIFLTCTKKFWEDDGIHGGKSTTDLPSRFIYYPNHNFPNGVGVIIAYGIGDDANYFQALDFEDCGDIVINDLSLIHQLPKEEIQAICRPSMIQRWSLDNYAMGGITTFTPYHFQHFSEALTAPVDRIYFAGEYTAQAHGWIDSTIKSGLRAATDVNRASENK</sequence>
<accession>X2L4E2</accession>
<proteinExistence type="evidence at protein level"/>
<name>OXLA_BOTPC</name>
<reference key="1">
    <citation type="journal article" date="2017" name="Toxicon">
        <title>Biochemical, biological and molecular characterization of an L-amino acid oxidase (LAAO) purified from Bothrops pictus Peruvian snake venom.</title>
        <authorList>
            <person name="Lazo F."/>
            <person name="Vivas-Ruiz D.E."/>
            <person name="Sandoval G.A."/>
            <person name="Rodriguez E.F."/>
            <person name="Kozlova E.E.G."/>
            <person name="Costal-Oliveira F."/>
            <person name="Chavez-Olortegui C."/>
            <person name="Severino R."/>
            <person name="Yarleque A."/>
            <person name="Sanchez E.F."/>
        </authorList>
    </citation>
    <scope>NUCLEOTIDE SEQUENCE [MRNA]</scope>
    <scope>PROTEIN SEQUENCE OF 12-32</scope>
    <scope>FUNCTION</scope>
    <scope>BIOPHYSICOCHEMICAL PROPERTIES</scope>
    <scope>ACTIVITY REGULATION</scope>
    <scope>CATALYTIC ACTIVITY</scope>
    <scope>SUBCELLULAR LOCATION</scope>
    <scope>GLYCOSYLATION</scope>
    <scope>3D-STRUCTURE MODELING</scope>
    <source>
        <tissue>Venom</tissue>
        <tissue>Venom gland</tissue>
    </source>
</reference>
<keyword id="KW-0044">Antibiotic</keyword>
<keyword id="KW-0929">Antimicrobial</keyword>
<keyword id="KW-0053">Apoptosis</keyword>
<keyword id="KW-0903">Direct protein sequencing</keyword>
<keyword id="KW-1015">Disulfide bond</keyword>
<keyword id="KW-0274">FAD</keyword>
<keyword id="KW-0285">Flavoprotein</keyword>
<keyword id="KW-0325">Glycoprotein</keyword>
<keyword id="KW-1199">Hemostasis impairing toxin</keyword>
<keyword id="KW-0560">Oxidoreductase</keyword>
<keyword id="KW-1201">Platelet aggregation inhibiting toxin</keyword>
<keyword id="KW-0964">Secreted</keyword>
<keyword id="KW-0732">Signal</keyword>
<keyword id="KW-0800">Toxin</keyword>